<accession>Q48UH3</accession>
<name>WHIA_STRPM</name>
<protein>
    <recommendedName>
        <fullName evidence="1">Probable cell division protein WhiA</fullName>
    </recommendedName>
</protein>
<reference key="1">
    <citation type="journal article" date="2005" name="J. Infect. Dis.">
        <title>Genome sequence of a serotype M28 strain of group A Streptococcus: potential new insights into puerperal sepsis and bacterial disease specificity.</title>
        <authorList>
            <person name="Green N.M."/>
            <person name="Zhang S."/>
            <person name="Porcella S.F."/>
            <person name="Nagiec M.J."/>
            <person name="Barbian K.D."/>
            <person name="Beres S.B."/>
            <person name="Lefebvre R.B."/>
            <person name="Musser J.M."/>
        </authorList>
    </citation>
    <scope>NUCLEOTIDE SEQUENCE [LARGE SCALE GENOMIC DNA]</scope>
    <source>
        <strain>MGAS6180</strain>
    </source>
</reference>
<sequence length="303" mass="33901">MSFTTKVKEELIHLSTGDNNELAAIIKLSGSLGLAHQSLHLSITTENAKIARYIYSLIEDAYVIVPEIRYHQKTNLRKNRVYTVYVEQGVETILADLKLADSFFGLETGIEPQVLSDDNAGRSYLKGAFLAAGSIRDPESGKYQLEIYSVYLDHAQDLAQLMQKFMLDAKTIEHKSGAVTYVQKAEDIMDFLIIIGAMSCKEDFEAIKLLREARNDINRANNAETANIAKTISASMKTINNIIKIMDTIGLESLPIELQQVAQLRVKHPDYSIQQVADALEFPITKSGVNHRLRKINKIADDL</sequence>
<gene>
    <name evidence="1" type="primary">whiA</name>
    <name type="ordered locus">M28_Spy0519</name>
</gene>
<proteinExistence type="inferred from homology"/>
<feature type="chain" id="PRO_0000376587" description="Probable cell division protein WhiA">
    <location>
        <begin position="1"/>
        <end position="303"/>
    </location>
</feature>
<feature type="DNA-binding region" description="H-T-H motif" evidence="1">
    <location>
        <begin position="272"/>
        <end position="303"/>
    </location>
</feature>
<organism>
    <name type="scientific">Streptococcus pyogenes serotype M28 (strain MGAS6180)</name>
    <dbReference type="NCBI Taxonomy" id="319701"/>
    <lineage>
        <taxon>Bacteria</taxon>
        <taxon>Bacillati</taxon>
        <taxon>Bacillota</taxon>
        <taxon>Bacilli</taxon>
        <taxon>Lactobacillales</taxon>
        <taxon>Streptococcaceae</taxon>
        <taxon>Streptococcus</taxon>
    </lineage>
</organism>
<comment type="function">
    <text evidence="1">Involved in cell division and chromosome segregation.</text>
</comment>
<comment type="similarity">
    <text evidence="1">Belongs to the WhiA family.</text>
</comment>
<evidence type="ECO:0000255" key="1">
    <source>
        <dbReference type="HAMAP-Rule" id="MF_01420"/>
    </source>
</evidence>
<dbReference type="EMBL" id="CP000056">
    <property type="protein sequence ID" value="AAX71633.1"/>
    <property type="molecule type" value="Genomic_DNA"/>
</dbReference>
<dbReference type="RefSeq" id="WP_002990485.1">
    <property type="nucleotide sequence ID" value="NC_007296.2"/>
</dbReference>
<dbReference type="SMR" id="Q48UH3"/>
<dbReference type="KEGG" id="spb:M28_Spy0519"/>
<dbReference type="HOGENOM" id="CLU_053282_0_0_9"/>
<dbReference type="GO" id="GO:0003677">
    <property type="term" value="F:DNA binding"/>
    <property type="evidence" value="ECO:0007669"/>
    <property type="project" value="UniProtKB-UniRule"/>
</dbReference>
<dbReference type="GO" id="GO:0051301">
    <property type="term" value="P:cell division"/>
    <property type="evidence" value="ECO:0007669"/>
    <property type="project" value="UniProtKB-UniRule"/>
</dbReference>
<dbReference type="GO" id="GO:0043937">
    <property type="term" value="P:regulation of sporulation"/>
    <property type="evidence" value="ECO:0007669"/>
    <property type="project" value="InterPro"/>
</dbReference>
<dbReference type="Gene3D" id="3.10.28.10">
    <property type="entry name" value="Homing endonucleases"/>
    <property type="match status" value="1"/>
</dbReference>
<dbReference type="HAMAP" id="MF_01420">
    <property type="entry name" value="HTH_type_WhiA"/>
    <property type="match status" value="1"/>
</dbReference>
<dbReference type="InterPro" id="IPR027434">
    <property type="entry name" value="Homing_endonucl"/>
</dbReference>
<dbReference type="InterPro" id="IPR018478">
    <property type="entry name" value="Sporu_reg_WhiA_N_dom"/>
</dbReference>
<dbReference type="InterPro" id="IPR003802">
    <property type="entry name" value="Sporulation_regulator_WhiA"/>
</dbReference>
<dbReference type="InterPro" id="IPR023054">
    <property type="entry name" value="Sporulation_regulator_WhiA_C"/>
</dbReference>
<dbReference type="InterPro" id="IPR039518">
    <property type="entry name" value="WhiA_LAGLIDADG_dom"/>
</dbReference>
<dbReference type="NCBIfam" id="TIGR00647">
    <property type="entry name" value="DNA_bind_WhiA"/>
    <property type="match status" value="1"/>
</dbReference>
<dbReference type="PANTHER" id="PTHR37307">
    <property type="entry name" value="CELL DIVISION PROTEIN WHIA-RELATED"/>
    <property type="match status" value="1"/>
</dbReference>
<dbReference type="PANTHER" id="PTHR37307:SF1">
    <property type="entry name" value="CELL DIVISION PROTEIN WHIA-RELATED"/>
    <property type="match status" value="1"/>
</dbReference>
<dbReference type="Pfam" id="PF02650">
    <property type="entry name" value="HTH_WhiA"/>
    <property type="match status" value="1"/>
</dbReference>
<dbReference type="Pfam" id="PF14527">
    <property type="entry name" value="LAGLIDADG_WhiA"/>
    <property type="match status" value="1"/>
</dbReference>
<dbReference type="Pfam" id="PF10298">
    <property type="entry name" value="WhiA_N"/>
    <property type="match status" value="1"/>
</dbReference>
<dbReference type="SUPFAM" id="SSF55608">
    <property type="entry name" value="Homing endonucleases"/>
    <property type="match status" value="1"/>
</dbReference>
<keyword id="KW-0131">Cell cycle</keyword>
<keyword id="KW-0132">Cell division</keyword>
<keyword id="KW-0238">DNA-binding</keyword>